<proteinExistence type="evidence at protein level"/>
<name>SMS_PIG</name>
<feature type="signal peptide" evidence="7 8">
    <location>
        <begin position="1"/>
        <end position="24"/>
    </location>
</feature>
<feature type="propeptide" id="PRO_0000033096" evidence="9 10">
    <location>
        <begin position="25"/>
        <end position="88"/>
    </location>
</feature>
<feature type="peptide" id="PRO_0000447378" description="Neuronostatin" evidence="6">
    <location>
        <begin position="31"/>
        <end position="43"/>
    </location>
</feature>
<feature type="peptide" id="PRO_0000033097" description="Somatostatin-28">
    <location>
        <begin position="89"/>
        <end position="116"/>
    </location>
</feature>
<feature type="peptide" id="PRO_0000033098" description="Somatostatin-14">
    <location>
        <begin position="103"/>
        <end position="116"/>
    </location>
</feature>
<feature type="region of interest" description="Disordered" evidence="4">
    <location>
        <begin position="62"/>
        <end position="99"/>
    </location>
</feature>
<feature type="modified residue" description="Alanine amide" evidence="6">
    <location>
        <position position="43"/>
    </location>
</feature>
<feature type="disulfide bond" evidence="5">
    <location>
        <begin position="105"/>
        <end position="116"/>
    </location>
</feature>
<protein>
    <recommendedName>
        <fullName>Somatostatin</fullName>
    </recommendedName>
    <component>
        <recommendedName>
            <fullName>Somatostatin-28</fullName>
        </recommendedName>
    </component>
    <component>
        <recommendedName>
            <fullName>Somatostatin-14</fullName>
        </recommendedName>
    </component>
    <component>
        <recommendedName>
            <fullName evidence="11">Neuronostatin</fullName>
            <shortName>NST</shortName>
        </recommendedName>
    </component>
</protein>
<organism>
    <name type="scientific">Sus scrofa</name>
    <name type="common">Pig</name>
    <dbReference type="NCBI Taxonomy" id="9823"/>
    <lineage>
        <taxon>Eukaryota</taxon>
        <taxon>Metazoa</taxon>
        <taxon>Chordata</taxon>
        <taxon>Craniata</taxon>
        <taxon>Vertebrata</taxon>
        <taxon>Euteleostomi</taxon>
        <taxon>Mammalia</taxon>
        <taxon>Eutheria</taxon>
        <taxon>Laurasiatheria</taxon>
        <taxon>Artiodactyla</taxon>
        <taxon>Suina</taxon>
        <taxon>Suidae</taxon>
        <taxon>Sus</taxon>
    </lineage>
</organism>
<accession>P01168</accession>
<accession>Q6PLR2</accession>
<evidence type="ECO:0000250" key="1">
    <source>
        <dbReference type="UniProtKB" id="P60041"/>
    </source>
</evidence>
<evidence type="ECO:0000250" key="2">
    <source>
        <dbReference type="UniProtKB" id="P60042"/>
    </source>
</evidence>
<evidence type="ECO:0000250" key="3">
    <source>
        <dbReference type="UniProtKB" id="P61278"/>
    </source>
</evidence>
<evidence type="ECO:0000256" key="4">
    <source>
        <dbReference type="SAM" id="MobiDB-lite"/>
    </source>
</evidence>
<evidence type="ECO:0000269" key="5">
    <source>
    </source>
</evidence>
<evidence type="ECO:0000269" key="6">
    <source>
    </source>
</evidence>
<evidence type="ECO:0000269" key="7">
    <source>
    </source>
</evidence>
<evidence type="ECO:0000269" key="8">
    <source>
    </source>
</evidence>
<evidence type="ECO:0000269" key="9">
    <source>
    </source>
</evidence>
<evidence type="ECO:0000269" key="10">
    <source>
    </source>
</evidence>
<evidence type="ECO:0000303" key="11">
    <source>
    </source>
</evidence>
<evidence type="ECO:0000305" key="12"/>
<reference key="1">
    <citation type="submission" date="2004-04" db="EMBL/GenBank/DDBJ databases">
        <title>Study on SNPs of porcine somatostatin gene.</title>
        <authorList>
            <person name="Liu D."/>
            <person name="Zhang Y."/>
            <person name="Zhang X."/>
            <person name="Yang G."/>
        </authorList>
    </citation>
    <scope>NUCLEOTIDE SEQUENCE [GENOMIC DNA]</scope>
</reference>
<reference key="2">
    <citation type="journal article" date="1989" name="J. Biol. Chem.">
        <title>Prosomatostatin 1-64 is a major product of somatostatin gene expression in pancreas and gut.</title>
        <authorList>
            <person name="Bersani M."/>
            <person name="Thim L."/>
            <person name="Baldissera F.G.A."/>
            <person name="Holst J.J."/>
        </authorList>
    </citation>
    <scope>PROTEIN SEQUENCE OF 25-88</scope>
</reference>
<reference key="3">
    <citation type="journal article" date="1985" name="FEBS Lett.">
        <title>Isolation and characterization of proSS1-32, a peptide derived from the N-terminal region of porcine preprosomatostatin.</title>
        <authorList>
            <person name="Schmidt W.E."/>
            <person name="Mutt V."/>
            <person name="Kratzin H."/>
            <person name="Carlquist M."/>
            <person name="Conlon J.M."/>
            <person name="Creutzfeldt W."/>
        </authorList>
    </citation>
    <scope>PROTEIN SEQUENCE OF 25-56</scope>
</reference>
<reference key="4">
    <citation type="journal article" date="2008" name="J. Biol. Chem.">
        <title>Neuronostatin encoded by the somatostatin gene regulates neuronal, cardiovascular, and metabolic functions.</title>
        <authorList>
            <person name="Samson W.K."/>
            <person name="Zhang J.V."/>
            <person name="Avsian-Kretchmer O."/>
            <person name="Cui K."/>
            <person name="Yosten G.L."/>
            <person name="Klein C."/>
            <person name="Lyu R.M."/>
            <person name="Wang Y.X."/>
            <person name="Chen X.Q."/>
            <person name="Yang J."/>
            <person name="Price C.J."/>
            <person name="Hoyda T.D."/>
            <person name="Ferguson A.V."/>
            <person name="Yuan X.B."/>
            <person name="Chang J.K."/>
            <person name="Hsueh A.J."/>
        </authorList>
    </citation>
    <scope>PROTEIN SEQUENCE OF 31-43</scope>
    <scope>IDENTIFICATION OF NEURONOSTATIN</scope>
    <scope>TISSUE SPECIFICITY (NEURONOSTATIN)</scope>
    <scope>AMIDATION AT ALA-43</scope>
    <source>
        <tissue>Pancreas</tissue>
    </source>
</reference>
<reference key="5">
    <citation type="journal article" date="1980" name="FEBS Lett.">
        <title>N-terminally extended somatostatin: the primary structure of somatostatin-28.</title>
        <authorList>
            <person name="Pradayrol L."/>
            <person name="Joernvall H."/>
            <person name="Mutt V."/>
            <person name="Ribet A."/>
        </authorList>
    </citation>
    <scope>PROTEIN SEQUENCE OF 89-116</scope>
    <source>
        <tissue>Intestine</tissue>
    </source>
</reference>
<reference key="6">
    <citation type="journal article" date="1980" name="Proc. Natl. Acad. Sci. U.S.A.">
        <title>Isolation and structure of pro-somatostatin: a putative somatostatin precursor from pig hypothalamus.</title>
        <authorList>
            <person name="Schally A.V."/>
            <person name="Huang W.-Y."/>
            <person name="Chang R.C.C."/>
            <person name="Arimura A."/>
            <person name="Redding T.W."/>
            <person name="Millar R.P."/>
            <person name="Hunkapiller M.W."/>
            <person name="Hood L.E."/>
        </authorList>
    </citation>
    <scope>PROTEIN SEQUENCE OF 89-116</scope>
    <source>
        <tissue>Hypothalamus</tissue>
    </source>
</reference>
<reference key="7">
    <citation type="journal article" date="1976" name="Biochemistry">
        <title>Isolation and structure of somatostatin from porcine hypothalami.</title>
        <authorList>
            <person name="Schally A.V."/>
            <person name="Dupont A."/>
            <person name="Arimura A."/>
            <person name="Redding T.W."/>
            <person name="Nishi N."/>
            <person name="Linthicum G.L."/>
            <person name="Schlesinger D.H."/>
        </authorList>
    </citation>
    <scope>PROTEIN SEQUENCE OF 103-116</scope>
</reference>
<reference key="8">
    <citation type="submission" date="1995-09" db="EMBL/GenBank/DDBJ databases">
        <authorList>
            <person name="Riquet J."/>
        </authorList>
    </citation>
    <scope>NUCLEOTIDE SEQUENCE [GENOMIC DNA] OF 46-116</scope>
</reference>
<sequence length="116" mass="12689">MLSCRLQCALAALSIVLALGGVTGAPSDPRLRQFLQKSLAAAAGKQELAKYFLAELLSEPNQTENDALEPEDLSQAAEQDEMRLELQRSANSNPAMAPRERKAGCKNFFWKTFTSC</sequence>
<keyword id="KW-0027">Amidation</keyword>
<keyword id="KW-0165">Cleavage on pair of basic residues</keyword>
<keyword id="KW-0903">Direct protein sequencing</keyword>
<keyword id="KW-1015">Disulfide bond</keyword>
<keyword id="KW-0372">Hormone</keyword>
<keyword id="KW-1185">Reference proteome</keyword>
<keyword id="KW-0964">Secreted</keyword>
<keyword id="KW-0732">Signal</keyword>
<dbReference type="EMBL" id="AY596204">
    <property type="protein sequence ID" value="AAT02532.1"/>
    <property type="molecule type" value="Genomic_DNA"/>
</dbReference>
<dbReference type="EMBL" id="U36385">
    <property type="protein sequence ID" value="AAB38485.1"/>
    <property type="molecule type" value="Genomic_DNA"/>
</dbReference>
<dbReference type="PIR" id="A34109">
    <property type="entry name" value="RIPGS"/>
</dbReference>
<dbReference type="RefSeq" id="NP_001009583.1">
    <property type="nucleotide sequence ID" value="NM_001009583.1"/>
</dbReference>
<dbReference type="FunCoup" id="P01168">
    <property type="interactions" value="618"/>
</dbReference>
<dbReference type="STRING" id="9823.ENSSSCP00000051543"/>
<dbReference type="PaxDb" id="9823-ENSSSCP00000012579"/>
<dbReference type="PeptideAtlas" id="P01168"/>
<dbReference type="Ensembl" id="ENSSSCT00000046992.3">
    <property type="protein sequence ID" value="ENSSSCP00000051543.1"/>
    <property type="gene ID" value="ENSSSCG00000033815.3"/>
</dbReference>
<dbReference type="Ensembl" id="ENSSSCT00015019504.1">
    <property type="protein sequence ID" value="ENSSSCP00015007643.1"/>
    <property type="gene ID" value="ENSSSCG00015014739.1"/>
</dbReference>
<dbReference type="Ensembl" id="ENSSSCT00025003825.1">
    <property type="protein sequence ID" value="ENSSSCP00025001464.1"/>
    <property type="gene ID" value="ENSSSCG00025002914.1"/>
</dbReference>
<dbReference type="Ensembl" id="ENSSSCT00030015223.1">
    <property type="protein sequence ID" value="ENSSSCP00030006819.1"/>
    <property type="gene ID" value="ENSSSCG00030011101.1"/>
</dbReference>
<dbReference type="Ensembl" id="ENSSSCT00035111155.1">
    <property type="protein sequence ID" value="ENSSSCP00035048622.1"/>
    <property type="gene ID" value="ENSSSCG00035080964.1"/>
</dbReference>
<dbReference type="Ensembl" id="ENSSSCT00040096870.1">
    <property type="protein sequence ID" value="ENSSSCP00040043106.1"/>
    <property type="gene ID" value="ENSSSCG00040070574.1"/>
</dbReference>
<dbReference type="Ensembl" id="ENSSSCT00045001853.1">
    <property type="protein sequence ID" value="ENSSSCP00045001163.1"/>
    <property type="gene ID" value="ENSSSCG00045001202.1"/>
</dbReference>
<dbReference type="Ensembl" id="ENSSSCT00050076731.1">
    <property type="protein sequence ID" value="ENSSSCP00050033065.1"/>
    <property type="gene ID" value="ENSSSCG00050056257.1"/>
</dbReference>
<dbReference type="Ensembl" id="ENSSSCT00055038776.1">
    <property type="protein sequence ID" value="ENSSSCP00055030820.1"/>
    <property type="gene ID" value="ENSSSCG00055019804.1"/>
</dbReference>
<dbReference type="Ensembl" id="ENSSSCT00060070140.1">
    <property type="protein sequence ID" value="ENSSSCP00060030262.1"/>
    <property type="gene ID" value="ENSSSCG00060051531.1"/>
</dbReference>
<dbReference type="Ensembl" id="ENSSSCT00065020382.1">
    <property type="protein sequence ID" value="ENSSSCP00065008277.1"/>
    <property type="gene ID" value="ENSSSCG00065015354.1"/>
</dbReference>
<dbReference type="Ensembl" id="ENSSSCT00070032031.1">
    <property type="protein sequence ID" value="ENSSSCP00070026709.1"/>
    <property type="gene ID" value="ENSSSCG00070016293.1"/>
</dbReference>
<dbReference type="Ensembl" id="ENSSSCT00090061221">
    <property type="protein sequence ID" value="ENSSSCP00090038171"/>
    <property type="gene ID" value="ENSSSCG00090034600"/>
</dbReference>
<dbReference type="Ensembl" id="ENSSSCT00105012012">
    <property type="protein sequence ID" value="ENSSSCP00105008912"/>
    <property type="gene ID" value="ENSSSCG00105005904"/>
</dbReference>
<dbReference type="Ensembl" id="ENSSSCT00110005769">
    <property type="protein sequence ID" value="ENSSSCP00110004313"/>
    <property type="gene ID" value="ENSSSCG00110002904"/>
</dbReference>
<dbReference type="Ensembl" id="ENSSSCT00115015793">
    <property type="protein sequence ID" value="ENSSSCP00115014895"/>
    <property type="gene ID" value="ENSSSCG00115009124"/>
</dbReference>
<dbReference type="Ensembl" id="ENSSSCT00130033489">
    <property type="protein sequence ID" value="ENSSSCP00130023136"/>
    <property type="gene ID" value="ENSSSCG00130009912"/>
</dbReference>
<dbReference type="GeneID" id="494469"/>
<dbReference type="KEGG" id="ssc:494469"/>
<dbReference type="CTD" id="6750"/>
<dbReference type="VGNC" id="VGNC:93495">
    <property type="gene designation" value="SST"/>
</dbReference>
<dbReference type="eggNOG" id="ENOG502S11K">
    <property type="taxonomic scope" value="Eukaryota"/>
</dbReference>
<dbReference type="GeneTree" id="ENSGT00510000047914"/>
<dbReference type="HOGENOM" id="CLU_124515_1_1_1"/>
<dbReference type="InParanoid" id="P01168"/>
<dbReference type="OMA" id="AEQDDMR"/>
<dbReference type="OrthoDB" id="9948948at2759"/>
<dbReference type="TreeFam" id="TF333185"/>
<dbReference type="Reactome" id="R-SSC-375276">
    <property type="pathway name" value="Peptide ligand-binding receptors"/>
</dbReference>
<dbReference type="Reactome" id="R-SSC-418594">
    <property type="pathway name" value="G alpha (i) signalling events"/>
</dbReference>
<dbReference type="Proteomes" id="UP000008227">
    <property type="component" value="Chromosome 13"/>
</dbReference>
<dbReference type="Proteomes" id="UP000314985">
    <property type="component" value="Chromosome 13"/>
</dbReference>
<dbReference type="Proteomes" id="UP000694570">
    <property type="component" value="Unplaced"/>
</dbReference>
<dbReference type="Proteomes" id="UP000694571">
    <property type="component" value="Unplaced"/>
</dbReference>
<dbReference type="Proteomes" id="UP000694720">
    <property type="component" value="Unplaced"/>
</dbReference>
<dbReference type="Proteomes" id="UP000694722">
    <property type="component" value="Unplaced"/>
</dbReference>
<dbReference type="Proteomes" id="UP000694723">
    <property type="component" value="Unplaced"/>
</dbReference>
<dbReference type="Proteomes" id="UP000694724">
    <property type="component" value="Unplaced"/>
</dbReference>
<dbReference type="Proteomes" id="UP000694725">
    <property type="component" value="Unplaced"/>
</dbReference>
<dbReference type="Proteomes" id="UP000694726">
    <property type="component" value="Unplaced"/>
</dbReference>
<dbReference type="Proteomes" id="UP000694727">
    <property type="component" value="Unplaced"/>
</dbReference>
<dbReference type="Proteomes" id="UP000694728">
    <property type="component" value="Unplaced"/>
</dbReference>
<dbReference type="Bgee" id="ENSSSCG00000033815">
    <property type="expression patterns" value="Expressed in frontal cortex and 24 other cell types or tissues"/>
</dbReference>
<dbReference type="GO" id="GO:0005829">
    <property type="term" value="C:cytosol"/>
    <property type="evidence" value="ECO:0007669"/>
    <property type="project" value="Ensembl"/>
</dbReference>
<dbReference type="GO" id="GO:0005615">
    <property type="term" value="C:extracellular space"/>
    <property type="evidence" value="ECO:0000318"/>
    <property type="project" value="GO_Central"/>
</dbReference>
<dbReference type="GO" id="GO:0098982">
    <property type="term" value="C:GABA-ergic synapse"/>
    <property type="evidence" value="ECO:0007669"/>
    <property type="project" value="Ensembl"/>
</dbReference>
<dbReference type="GO" id="GO:0005179">
    <property type="term" value="F:hormone activity"/>
    <property type="evidence" value="ECO:0007669"/>
    <property type="project" value="UniProtKB-KW"/>
</dbReference>
<dbReference type="GO" id="GO:0030334">
    <property type="term" value="P:regulation of cell migration"/>
    <property type="evidence" value="ECO:0000250"/>
    <property type="project" value="AgBase"/>
</dbReference>
<dbReference type="GO" id="GO:0099072">
    <property type="term" value="P:regulation of postsynaptic membrane neurotransmitter receptor levels"/>
    <property type="evidence" value="ECO:0007669"/>
    <property type="project" value="Ensembl"/>
</dbReference>
<dbReference type="GO" id="GO:0038170">
    <property type="term" value="P:somatostatin signaling pathway"/>
    <property type="evidence" value="ECO:0007669"/>
    <property type="project" value="Ensembl"/>
</dbReference>
<dbReference type="InterPro" id="IPR004250">
    <property type="entry name" value="Somatostatin"/>
</dbReference>
<dbReference type="InterPro" id="IPR018142">
    <property type="entry name" value="Somatostatin/Cortistatin_C"/>
</dbReference>
<dbReference type="PANTHER" id="PTHR10558">
    <property type="entry name" value="SOMATOSTATIN"/>
    <property type="match status" value="1"/>
</dbReference>
<dbReference type="PANTHER" id="PTHR10558:SF2">
    <property type="entry name" value="SOMATOSTATIN"/>
    <property type="match status" value="1"/>
</dbReference>
<dbReference type="Pfam" id="PF03002">
    <property type="entry name" value="Somatostatin"/>
    <property type="match status" value="1"/>
</dbReference>
<dbReference type="PIRSF" id="PIRSF001814">
    <property type="entry name" value="Somatostatin"/>
    <property type="match status" value="1"/>
</dbReference>
<comment type="function">
    <molecule>Somatostatin-14</molecule>
    <text evidence="3">Inhibits the secretion of pituitary hormones, including that of growth hormone/somatotropin (GH1), PRL, ACTH, luteinizing hormone (LH) and TSH. Also impairs ghrelin- and GnRH-stimulated secretion of GH1 and LH; the inhibition of ghrelin-stimulated secretion of GH1 can be further increased by neuronostatin.</text>
</comment>
<comment type="function">
    <molecule>Neuronostatin</molecule>
    <text evidence="1 2 3">May enhance low-glucose-induced glucagon release by pancreatic alpha cells. This effect may be mediated by binding to GPR107 and PKA activation (By similarity). May regulate cardiac contractile function (By similarity). May compromise cardiomyocyte viability. In the central nervous system, may impair memory retention and may affect hippocampal excitability. May also have anxiolytic and anorexigenic effects. May play a role in arterial pressure regulation (By similarity). May inhibit basal, but not ghrelin- or GnRH-stimulated secretion of GH1 or LH, but does not affect the release of other pituitary hormones, including PRL, ACTH, FSH or TSH. Potentiates inhibitory action of somatostatin on ghrelin-stimulated secretion of GH1, but not that on GnRH-stimulated secretion of LH (By similarity).</text>
</comment>
<comment type="subcellular location">
    <subcellularLocation>
        <location evidence="2">Secreted</location>
    </subcellularLocation>
</comment>
<comment type="tissue specificity">
    <molecule>Neuronostatin</molecule>
    <text evidence="6">Expressed in the pancreas and the spleen (at protein level).</text>
</comment>
<comment type="PTM">
    <text evidence="2">C-terminal amidation of the neuronostatin peptide is required for its biological activity, including for the regulation of mean arterial pressure.</text>
</comment>
<comment type="similarity">
    <text evidence="12">Belongs to the somatostatin family.</text>
</comment>
<gene>
    <name type="primary">SST</name>
</gene>